<name>AN32A_BOVIN</name>
<organism>
    <name type="scientific">Bos taurus</name>
    <name type="common">Bovine</name>
    <dbReference type="NCBI Taxonomy" id="9913"/>
    <lineage>
        <taxon>Eukaryota</taxon>
        <taxon>Metazoa</taxon>
        <taxon>Chordata</taxon>
        <taxon>Craniata</taxon>
        <taxon>Vertebrata</taxon>
        <taxon>Euteleostomi</taxon>
        <taxon>Mammalia</taxon>
        <taxon>Eutheria</taxon>
        <taxon>Laurasiatheria</taxon>
        <taxon>Artiodactyla</taxon>
        <taxon>Ruminantia</taxon>
        <taxon>Pecora</taxon>
        <taxon>Bovidae</taxon>
        <taxon>Bovinae</taxon>
        <taxon>Bos</taxon>
    </lineage>
</organism>
<accession>P51122</accession>
<accession>P55930</accession>
<comment type="function">
    <text evidence="2">Multifunctional protein that is involved in the regulation of many processes including tumor suppression, apoptosis, cell cycle progression or transcription. Promotes apoptosis by favouring the activation of caspase-9/CASP9 and allowing apoptosome formation. In addition, plays a role in the modulation of histone acetylation and transcription as part of the INHAT (inhibitor of histone acetyltransferases) complex. Inhibits the histone-acetyltranferase activity of EP300/CREBBP (CREB-binding protein) and EP300/CREBBP-associated factor by histone masking. Preferentially binds to unmodified histone H3 and sterically inhibiting its acetylation and phosphorylation leading to cell growth inhibition. Participates in other biochemical processes such as regulation of mRNA nuclear-to-cytoplasmic translocation and stability by its association with ELAVL1 (Hu-antigen R). Plays a role in E4F1-mediated transcriptional repression as well as inhibition of protein phosphatase 2A.</text>
</comment>
<comment type="subunit">
    <text evidence="1">Component of the SET complex, composed of at least ANP32A, APEX1, HMGB2, NME1, SET and TREX1. Directly interacts with SET. Interacts with ATXN1/SCA1. Interacts with MAP1B. Interacts with ELAVL1. Part of the INHAT (inhibitor of histone acetyltransferases) complex. Interacts with E4F1 (By similarity).</text>
</comment>
<comment type="subcellular location">
    <subcellularLocation>
        <location>Nucleus</location>
    </subcellularLocation>
    <subcellularLocation>
        <location>Cytoplasm</location>
    </subcellularLocation>
    <subcellularLocation>
        <location evidence="1">Endoplasmic reticulum</location>
    </subcellularLocation>
    <text evidence="1">Shuttles between nucleus and cytoplasm. Translocates to the cytoplasm during the process of neuritogenesis (By similarity).</text>
</comment>
<comment type="tissue specificity">
    <text>Widely distributed in the central nervous system, with an abundant expression in the cerebellum.</text>
</comment>
<comment type="PTM">
    <text>The N-terminus is blocked.</text>
</comment>
<comment type="PTM">
    <text evidence="2">Phosphorylated on serine residues, at least in part by casein kinase 2/CK2.</text>
</comment>
<comment type="PTM">
    <text evidence="1">Some glutamate residues are glycylated by TTLL8. This modification occurs exclusively on glutamate residues and results in a glycine chain on the gamma-carboxyl group (By similarity).</text>
</comment>
<comment type="similarity">
    <text evidence="4">Belongs to the ANP32 family.</text>
</comment>
<gene>
    <name type="primary">ANP32A</name>
    <name type="synonym">LANP</name>
    <name type="synonym">PHAP1</name>
</gene>
<feature type="chain" id="PRO_0000137591" description="Acidic leucine-rich nuclear phosphoprotein 32 family member A">
    <location>
        <begin position="1"/>
        <end position="249"/>
    </location>
</feature>
<feature type="repeat" description="LRR 1">
    <location>
        <begin position="18"/>
        <end position="38"/>
    </location>
</feature>
<feature type="repeat" description="LRR 2">
    <location>
        <begin position="43"/>
        <end position="64"/>
    </location>
</feature>
<feature type="repeat" description="LRR 3">
    <location>
        <begin position="65"/>
        <end position="87"/>
    </location>
</feature>
<feature type="repeat" description="LRR 4">
    <location>
        <begin position="89"/>
        <end position="110"/>
    </location>
</feature>
<feature type="domain" description="LRRCT">
    <location>
        <begin position="123"/>
        <end position="161"/>
    </location>
</feature>
<feature type="region of interest" description="Disordered" evidence="3">
    <location>
        <begin position="147"/>
        <end position="249"/>
    </location>
</feature>
<feature type="region of interest" description="Necessary for tumor-suppressive function" evidence="1">
    <location>
        <begin position="150"/>
        <end position="174"/>
    </location>
</feature>
<feature type="region of interest" description="Interaction with E4F1" evidence="1">
    <location>
        <begin position="165"/>
        <end position="249"/>
    </location>
</feature>
<feature type="compositionally biased region" description="Basic and acidic residues" evidence="3">
    <location>
        <begin position="147"/>
        <end position="156"/>
    </location>
</feature>
<feature type="compositionally biased region" description="Acidic residues" evidence="3">
    <location>
        <begin position="157"/>
        <end position="230"/>
    </location>
</feature>
<feature type="modified residue" description="Phosphothreonine" evidence="2">
    <location>
        <position position="15"/>
    </location>
</feature>
<feature type="modified residue" description="Phosphoserine" evidence="2">
    <location>
        <position position="17"/>
    </location>
</feature>
<feature type="modified residue" description="Phosphoserine" evidence="2">
    <location>
        <position position="158"/>
    </location>
</feature>
<feature type="modified residue" description="Phosphoserine" evidence="2">
    <location>
        <position position="204"/>
    </location>
</feature>
<evidence type="ECO:0000250" key="1"/>
<evidence type="ECO:0000250" key="2">
    <source>
        <dbReference type="UniProtKB" id="P39687"/>
    </source>
</evidence>
<evidence type="ECO:0000256" key="3">
    <source>
        <dbReference type="SAM" id="MobiDB-lite"/>
    </source>
</evidence>
<evidence type="ECO:0000305" key="4"/>
<dbReference type="EMBL" id="CN437768">
    <property type="status" value="NOT_ANNOTATED_CDS"/>
    <property type="molecule type" value="mRNA"/>
</dbReference>
<dbReference type="EMBL" id="DV929633">
    <property type="status" value="NOT_ANNOTATED_CDS"/>
    <property type="molecule type" value="mRNA"/>
</dbReference>
<dbReference type="RefSeq" id="NP_001181948.1">
    <property type="nucleotide sequence ID" value="NM_001195019.1"/>
</dbReference>
<dbReference type="SMR" id="P51122"/>
<dbReference type="FunCoup" id="P51122">
    <property type="interactions" value="2781"/>
</dbReference>
<dbReference type="STRING" id="9913.ENSBTAP00000016410"/>
<dbReference type="PaxDb" id="9913-ENSBTAP00000016410"/>
<dbReference type="PeptideAtlas" id="P51122"/>
<dbReference type="Ensembl" id="ENSBTAT00000016410.6">
    <property type="protein sequence ID" value="ENSBTAP00000016410.5"/>
    <property type="gene ID" value="ENSBTAG00000012365.7"/>
</dbReference>
<dbReference type="GeneID" id="538427"/>
<dbReference type="KEGG" id="bta:538427"/>
<dbReference type="CTD" id="8125"/>
<dbReference type="VEuPathDB" id="HostDB:ENSBTAG00000012365"/>
<dbReference type="eggNOG" id="KOG2739">
    <property type="taxonomic scope" value="Eukaryota"/>
</dbReference>
<dbReference type="GeneTree" id="ENSGT00950000182907"/>
<dbReference type="HOGENOM" id="CLU_063314_1_1_1"/>
<dbReference type="InParanoid" id="P51122"/>
<dbReference type="OMA" id="VTNENAY"/>
<dbReference type="OrthoDB" id="2160613at2759"/>
<dbReference type="TreeFam" id="TF317206"/>
<dbReference type="Reactome" id="R-BTA-450520">
    <property type="pathway name" value="HuR (ELAVL1) binds and stabilizes mRNA"/>
</dbReference>
<dbReference type="Proteomes" id="UP000009136">
    <property type="component" value="Chromosome 10"/>
</dbReference>
<dbReference type="Bgee" id="ENSBTAG00000012365">
    <property type="expression patterns" value="Expressed in pharyngeal tonsil and 102 other cell types or tissues"/>
</dbReference>
<dbReference type="GO" id="GO:0005737">
    <property type="term" value="C:cytoplasm"/>
    <property type="evidence" value="ECO:0000250"/>
    <property type="project" value="UniProtKB"/>
</dbReference>
<dbReference type="GO" id="GO:0005783">
    <property type="term" value="C:endoplasmic reticulum"/>
    <property type="evidence" value="ECO:0000250"/>
    <property type="project" value="UniProtKB"/>
</dbReference>
<dbReference type="GO" id="GO:0005634">
    <property type="term" value="C:nucleus"/>
    <property type="evidence" value="ECO:0000250"/>
    <property type="project" value="UniProtKB"/>
</dbReference>
<dbReference type="GO" id="GO:0048471">
    <property type="term" value="C:perinuclear region of cytoplasm"/>
    <property type="evidence" value="ECO:0000250"/>
    <property type="project" value="UniProtKB"/>
</dbReference>
<dbReference type="GO" id="GO:0042393">
    <property type="term" value="F:histone binding"/>
    <property type="evidence" value="ECO:0000318"/>
    <property type="project" value="GO_Central"/>
</dbReference>
<dbReference type="GO" id="GO:0006913">
    <property type="term" value="P:nucleocytoplasmic transport"/>
    <property type="evidence" value="ECO:0000250"/>
    <property type="project" value="UniProtKB"/>
</dbReference>
<dbReference type="GO" id="GO:0042981">
    <property type="term" value="P:regulation of apoptotic process"/>
    <property type="evidence" value="ECO:0000318"/>
    <property type="project" value="GO_Central"/>
</dbReference>
<dbReference type="FunFam" id="3.80.10.10:FF:000003">
    <property type="entry name" value="Acidic leucine-rich nuclear phosphoprotein 32 family member A"/>
    <property type="match status" value="1"/>
</dbReference>
<dbReference type="Gene3D" id="3.80.10.10">
    <property type="entry name" value="Ribonuclease Inhibitor"/>
    <property type="match status" value="1"/>
</dbReference>
<dbReference type="InterPro" id="IPR045081">
    <property type="entry name" value="AN32"/>
</dbReference>
<dbReference type="InterPro" id="IPR001611">
    <property type="entry name" value="Leu-rich_rpt"/>
</dbReference>
<dbReference type="InterPro" id="IPR032675">
    <property type="entry name" value="LRR_dom_sf"/>
</dbReference>
<dbReference type="InterPro" id="IPR003603">
    <property type="entry name" value="U2A'_phosphoprotein32A_C"/>
</dbReference>
<dbReference type="PANTHER" id="PTHR11375">
    <property type="entry name" value="ACIDIC LEUCINE-RICH NUCLEAR PHOSPHOPROTEIN 32"/>
    <property type="match status" value="1"/>
</dbReference>
<dbReference type="PANTHER" id="PTHR11375:SF1">
    <property type="entry name" value="ACIDIC LEUCINE-RICH NUCLEAR PHOSPHOPROTEIN 32 FAMILY MEMBER A"/>
    <property type="match status" value="1"/>
</dbReference>
<dbReference type="Pfam" id="PF14580">
    <property type="entry name" value="LRR_9"/>
    <property type="match status" value="1"/>
</dbReference>
<dbReference type="SMART" id="SM00446">
    <property type="entry name" value="LRRcap"/>
    <property type="match status" value="1"/>
</dbReference>
<dbReference type="SUPFAM" id="SSF52058">
    <property type="entry name" value="L domain-like"/>
    <property type="match status" value="1"/>
</dbReference>
<dbReference type="PROSITE" id="PS51450">
    <property type="entry name" value="LRR"/>
    <property type="match status" value="4"/>
</dbReference>
<reference key="1">
    <citation type="submission" date="2004-04" db="EMBL/GenBank/DDBJ databases">
        <title>Bovine embryonic ESTs.</title>
        <authorList>
            <person name="Lewin H.A."/>
            <person name="Renard J.P."/>
            <person name="Yang X.J."/>
            <person name="Hernandez A."/>
            <person name="Degrelle S."/>
            <person name="Hue I."/>
            <person name="Tian X.C."/>
            <person name="Liu L."/>
            <person name="Everts R.E."/>
        </authorList>
    </citation>
    <scope>NUCLEOTIDE SEQUENCE [LARGE SCALE MRNA] OF 1-201</scope>
</reference>
<reference key="2">
    <citation type="submission" date="2005-12" db="EMBL/GenBank/DDBJ databases">
        <title>Bovine genome sequencing program: full-length cDNA sequencing.</title>
        <authorList>
            <person name="Moore S."/>
            <person name="Alexander L."/>
            <person name="Brownstein M."/>
            <person name="Guan L."/>
            <person name="Lobo S."/>
            <person name="Meng Y."/>
            <person name="Tanaguchi M."/>
            <person name="Wang Z."/>
            <person name="Yu J."/>
            <person name="Prange C."/>
            <person name="Schreiber K."/>
            <person name="Shenmen C."/>
            <person name="Wagner L."/>
            <person name="Bala M."/>
            <person name="Barbazuk S."/>
            <person name="Barber S."/>
            <person name="Babakaiff R."/>
            <person name="Beland J."/>
            <person name="Chun E."/>
            <person name="Del Rio L."/>
            <person name="Gibson S."/>
            <person name="Hanson R."/>
            <person name="Kirkpatrick R."/>
            <person name="Liu J."/>
            <person name="Matsuo C."/>
            <person name="Mayo M."/>
            <person name="Santos R.R."/>
            <person name="Stott J."/>
            <person name="Tsai M."/>
            <person name="Wong D."/>
            <person name="Siddiqui A."/>
            <person name="Holt R."/>
            <person name="Jones S.J."/>
            <person name="Marra M.A."/>
        </authorList>
    </citation>
    <scope>NUCLEOTIDE SEQUENCE [LARGE SCALE MRNA] OF 84-249</scope>
</reference>
<reference key="3">
    <citation type="journal article" date="1994" name="Proc. Natl. Acad. Sci. U.S.A.">
        <title>A nuclear factor containing the leucine-rich repeats expressed in murine cerebellar neurons.</title>
        <authorList>
            <person name="Matsuoka K."/>
            <person name="Taoka M."/>
            <person name="Satozawa N."/>
            <person name="Nakayama H."/>
            <person name="Ichimura T."/>
            <person name="Takahashi N."/>
            <person name="Yamakuni T."/>
            <person name="Song S.-Y."/>
            <person name="Isobe T."/>
        </authorList>
    </citation>
    <scope>PROTEIN SEQUENCE OF 4-165 AND 235-245</scope>
    <source>
        <tissue>Brain</tissue>
    </source>
</reference>
<reference key="4">
    <citation type="journal article" date="1996" name="Biochemistry">
        <title>Molecular identification of I1PP2A, a novel potent heat-stable inhibitor protein of protein phosphatase 2A.</title>
        <authorList>
            <person name="Li M."/>
            <person name="Makkinje A."/>
            <person name="Damuni Z."/>
        </authorList>
    </citation>
    <scope>PROTEIN SEQUENCE OF 7-12 AND 29-44</scope>
    <source>
        <tissue>Kidney</tissue>
    </source>
</reference>
<reference key="5">
    <citation type="journal article" date="2005" name="Cerebellum">
        <title>The Anp32 family of proteins containing leucine-rich repeats.</title>
        <authorList>
            <person name="Matilla A."/>
            <person name="Radrizzani M."/>
        </authorList>
    </citation>
    <scope>GENE FAMILY</scope>
    <scope>NOMENCLATURE</scope>
</reference>
<keyword id="KW-0963">Cytoplasm</keyword>
<keyword id="KW-0903">Direct protein sequencing</keyword>
<keyword id="KW-0256">Endoplasmic reticulum</keyword>
<keyword id="KW-0433">Leucine-rich repeat</keyword>
<keyword id="KW-0539">Nucleus</keyword>
<keyword id="KW-0597">Phosphoprotein</keyword>
<keyword id="KW-1185">Reference proteome</keyword>
<keyword id="KW-0677">Repeat</keyword>
<keyword id="KW-0678">Repressor</keyword>
<keyword id="KW-0804">Transcription</keyword>
<keyword id="KW-0805">Transcription regulation</keyword>
<proteinExistence type="evidence at protein level"/>
<sequence length="249" mass="28617">MDMDKRIHLELRNRTPSDVKELVLDNCRSNEGKIEGLTDEFEELEFLSTINVGLTSVANLPKLNKLKKLELSDNRISGGLEVLAEKCPNLTHLNLSGNKIKDLSTIEPLKKLENLKSLDLFNCEVTNLNDYRENVFKLLPQLTYLDGYDRDDKEAPDSDAEGYVEGLDDDEEDEDEEEYDEDAQVVEDEEDEEEEEEGEEEDVSGEEEEDEEGYNDGEVDDEEDEEELGEEERGQKRKREPEDEGEDDD</sequence>
<protein>
    <recommendedName>
        <fullName>Acidic leucine-rich nuclear phosphoprotein 32 family member A</fullName>
    </recommendedName>
    <alternativeName>
        <fullName>Leucine-rich acidic nuclear protein</fullName>
        <shortName>LANP</shortName>
    </alternativeName>
    <alternativeName>
        <fullName>Potent heat-stable protein phosphatase 2A inhibitor I1PP2A</fullName>
    </alternativeName>
</protein>